<gene>
    <name evidence="1" type="primary">hisF</name>
    <name type="ordered locus">Sputw3181_1825</name>
</gene>
<feature type="chain" id="PRO_1000063151" description="Imidazole glycerol phosphate synthase subunit HisF">
    <location>
        <begin position="1"/>
        <end position="257"/>
    </location>
</feature>
<feature type="active site" evidence="1">
    <location>
        <position position="11"/>
    </location>
</feature>
<feature type="active site" evidence="1">
    <location>
        <position position="130"/>
    </location>
</feature>
<reference key="1">
    <citation type="submission" date="2006-12" db="EMBL/GenBank/DDBJ databases">
        <title>Complete sequence of Shewanella sp. W3-18-1.</title>
        <authorList>
            <consortium name="US DOE Joint Genome Institute"/>
            <person name="Copeland A."/>
            <person name="Lucas S."/>
            <person name="Lapidus A."/>
            <person name="Barry K."/>
            <person name="Detter J.C."/>
            <person name="Glavina del Rio T."/>
            <person name="Hammon N."/>
            <person name="Israni S."/>
            <person name="Dalin E."/>
            <person name="Tice H."/>
            <person name="Pitluck S."/>
            <person name="Chain P."/>
            <person name="Malfatti S."/>
            <person name="Shin M."/>
            <person name="Vergez L."/>
            <person name="Schmutz J."/>
            <person name="Larimer F."/>
            <person name="Land M."/>
            <person name="Hauser L."/>
            <person name="Kyrpides N."/>
            <person name="Lykidis A."/>
            <person name="Tiedje J."/>
            <person name="Richardson P."/>
        </authorList>
    </citation>
    <scope>NUCLEOTIDE SEQUENCE [LARGE SCALE GENOMIC DNA]</scope>
    <source>
        <strain>W3-18-1</strain>
    </source>
</reference>
<protein>
    <recommendedName>
        <fullName evidence="1">Imidazole glycerol phosphate synthase subunit HisF</fullName>
        <ecNumber evidence="1">4.3.2.10</ecNumber>
    </recommendedName>
    <alternativeName>
        <fullName evidence="1">IGP synthase cyclase subunit</fullName>
    </alternativeName>
    <alternativeName>
        <fullName evidence="1">IGP synthase subunit HisF</fullName>
    </alternativeName>
    <alternativeName>
        <fullName evidence="1">ImGP synthase subunit HisF</fullName>
        <shortName evidence="1">IGPS subunit HisF</shortName>
    </alternativeName>
</protein>
<organism>
    <name type="scientific">Shewanella sp. (strain W3-18-1)</name>
    <dbReference type="NCBI Taxonomy" id="351745"/>
    <lineage>
        <taxon>Bacteria</taxon>
        <taxon>Pseudomonadati</taxon>
        <taxon>Pseudomonadota</taxon>
        <taxon>Gammaproteobacteria</taxon>
        <taxon>Alteromonadales</taxon>
        <taxon>Shewanellaceae</taxon>
        <taxon>Shewanella</taxon>
    </lineage>
</organism>
<evidence type="ECO:0000255" key="1">
    <source>
        <dbReference type="HAMAP-Rule" id="MF_01013"/>
    </source>
</evidence>
<keyword id="KW-0028">Amino-acid biosynthesis</keyword>
<keyword id="KW-0963">Cytoplasm</keyword>
<keyword id="KW-0368">Histidine biosynthesis</keyword>
<keyword id="KW-0456">Lyase</keyword>
<name>HIS6_SHESW</name>
<sequence>MLAKRLVPCLDVKDGKVVKGVQFRNHEIVGDIVPLAARYAEEGADELVFYDITASAHERVVDKSWVSRVAEQIDIPFCVAGGIKTISQARELLAFGADKISINSPALTDPSLISRLQDEFGRQCIVIGIDSFFDASSNSYKVKQFTGDEAATKDTQWFTQDWVEEVQKRGCGEIVLNVMNQDGVRGGYDIKQLSLVRAICDVPLIASGGAGTMAHFRDVFIEAKVDAALAASVFHKAIINIGELKAYLAAEGIAIRR</sequence>
<comment type="function">
    <text evidence="1">IGPS catalyzes the conversion of PRFAR and glutamine to IGP, AICAR and glutamate. The HisF subunit catalyzes the cyclization activity that produces IGP and AICAR from PRFAR using the ammonia provided by the HisH subunit.</text>
</comment>
<comment type="catalytic activity">
    <reaction evidence="1">
        <text>5-[(5-phospho-1-deoxy-D-ribulos-1-ylimino)methylamino]-1-(5-phospho-beta-D-ribosyl)imidazole-4-carboxamide + L-glutamine = D-erythro-1-(imidazol-4-yl)glycerol 3-phosphate + 5-amino-1-(5-phospho-beta-D-ribosyl)imidazole-4-carboxamide + L-glutamate + H(+)</text>
        <dbReference type="Rhea" id="RHEA:24793"/>
        <dbReference type="ChEBI" id="CHEBI:15378"/>
        <dbReference type="ChEBI" id="CHEBI:29985"/>
        <dbReference type="ChEBI" id="CHEBI:58278"/>
        <dbReference type="ChEBI" id="CHEBI:58359"/>
        <dbReference type="ChEBI" id="CHEBI:58475"/>
        <dbReference type="ChEBI" id="CHEBI:58525"/>
        <dbReference type="EC" id="4.3.2.10"/>
    </reaction>
</comment>
<comment type="pathway">
    <text evidence="1">Amino-acid biosynthesis; L-histidine biosynthesis; L-histidine from 5-phospho-alpha-D-ribose 1-diphosphate: step 5/9.</text>
</comment>
<comment type="subunit">
    <text evidence="1">Heterodimer of HisH and HisF.</text>
</comment>
<comment type="subcellular location">
    <subcellularLocation>
        <location evidence="1">Cytoplasm</location>
    </subcellularLocation>
</comment>
<comment type="similarity">
    <text evidence="1">Belongs to the HisA/HisF family.</text>
</comment>
<accession>A1RJ16</accession>
<proteinExistence type="inferred from homology"/>
<dbReference type="EC" id="4.3.2.10" evidence="1"/>
<dbReference type="EMBL" id="CP000503">
    <property type="protein sequence ID" value="ABM24661.1"/>
    <property type="molecule type" value="Genomic_DNA"/>
</dbReference>
<dbReference type="RefSeq" id="WP_011789157.1">
    <property type="nucleotide sequence ID" value="NC_008750.1"/>
</dbReference>
<dbReference type="SMR" id="A1RJ16"/>
<dbReference type="KEGG" id="shw:Sputw3181_1825"/>
<dbReference type="HOGENOM" id="CLU_048577_4_0_6"/>
<dbReference type="UniPathway" id="UPA00031">
    <property type="reaction ID" value="UER00010"/>
</dbReference>
<dbReference type="Proteomes" id="UP000002597">
    <property type="component" value="Chromosome"/>
</dbReference>
<dbReference type="GO" id="GO:0005737">
    <property type="term" value="C:cytoplasm"/>
    <property type="evidence" value="ECO:0007669"/>
    <property type="project" value="UniProtKB-SubCell"/>
</dbReference>
<dbReference type="GO" id="GO:0000107">
    <property type="term" value="F:imidazoleglycerol-phosphate synthase activity"/>
    <property type="evidence" value="ECO:0007669"/>
    <property type="project" value="UniProtKB-UniRule"/>
</dbReference>
<dbReference type="GO" id="GO:0016829">
    <property type="term" value="F:lyase activity"/>
    <property type="evidence" value="ECO:0007669"/>
    <property type="project" value="UniProtKB-KW"/>
</dbReference>
<dbReference type="GO" id="GO:0000105">
    <property type="term" value="P:L-histidine biosynthetic process"/>
    <property type="evidence" value="ECO:0007669"/>
    <property type="project" value="UniProtKB-UniRule"/>
</dbReference>
<dbReference type="CDD" id="cd04731">
    <property type="entry name" value="HisF"/>
    <property type="match status" value="1"/>
</dbReference>
<dbReference type="FunFam" id="3.20.20.70:FF:000006">
    <property type="entry name" value="Imidazole glycerol phosphate synthase subunit HisF"/>
    <property type="match status" value="1"/>
</dbReference>
<dbReference type="Gene3D" id="3.20.20.70">
    <property type="entry name" value="Aldolase class I"/>
    <property type="match status" value="1"/>
</dbReference>
<dbReference type="HAMAP" id="MF_01013">
    <property type="entry name" value="HisF"/>
    <property type="match status" value="1"/>
</dbReference>
<dbReference type="InterPro" id="IPR013785">
    <property type="entry name" value="Aldolase_TIM"/>
</dbReference>
<dbReference type="InterPro" id="IPR006062">
    <property type="entry name" value="His_biosynth"/>
</dbReference>
<dbReference type="InterPro" id="IPR004651">
    <property type="entry name" value="HisF"/>
</dbReference>
<dbReference type="InterPro" id="IPR050064">
    <property type="entry name" value="IGPS_HisA/HisF"/>
</dbReference>
<dbReference type="InterPro" id="IPR011060">
    <property type="entry name" value="RibuloseP-bd_barrel"/>
</dbReference>
<dbReference type="NCBIfam" id="TIGR00735">
    <property type="entry name" value="hisF"/>
    <property type="match status" value="1"/>
</dbReference>
<dbReference type="PANTHER" id="PTHR21235:SF2">
    <property type="entry name" value="IMIDAZOLE GLYCEROL PHOSPHATE SYNTHASE HISHF"/>
    <property type="match status" value="1"/>
</dbReference>
<dbReference type="PANTHER" id="PTHR21235">
    <property type="entry name" value="IMIDAZOLE GLYCEROL PHOSPHATE SYNTHASE SUBUNIT HISF/H IGP SYNTHASE SUBUNIT HISF/H"/>
    <property type="match status" value="1"/>
</dbReference>
<dbReference type="Pfam" id="PF00977">
    <property type="entry name" value="His_biosynth"/>
    <property type="match status" value="1"/>
</dbReference>
<dbReference type="SUPFAM" id="SSF51366">
    <property type="entry name" value="Ribulose-phoshate binding barrel"/>
    <property type="match status" value="1"/>
</dbReference>